<protein>
    <recommendedName>
        <fullName>ORF4 polyprotein</fullName>
    </recommendedName>
</protein>
<accession>Q27YG7</accession>
<organismHost>
    <name type="scientific">Drosophila melanogaster</name>
    <name type="common">Fruit fly</name>
    <dbReference type="NCBI Taxonomy" id="7227"/>
</organismHost>
<evidence type="ECO:0000269" key="1">
    <source>
    </source>
</evidence>
<evidence type="ECO:0000305" key="2">
    <source>
    </source>
</evidence>
<evidence type="ECO:0007829" key="3">
    <source>
        <dbReference type="PDB" id="5MM2"/>
    </source>
</evidence>
<name>CAPS4_NORAV</name>
<organism>
    <name type="scientific">Nora virus</name>
    <dbReference type="NCBI Taxonomy" id="3071212"/>
    <lineage>
        <taxon>Viruses</taxon>
        <taxon>Riboviria</taxon>
        <taxon>Orthornavirae</taxon>
        <taxon>Pisuviricota</taxon>
        <taxon>Pisoniviricetes</taxon>
        <taxon>Picornavirales</taxon>
        <taxon>Noraviridae</taxon>
        <taxon>Orthonoravirus</taxon>
        <taxon>Orthonoravirus melanogastri</taxon>
    </lineage>
</organism>
<keyword id="KW-0002">3D-structure</keyword>
<keyword id="KW-0167">Capsid protein</keyword>
<keyword id="KW-0946">Virion</keyword>
<dbReference type="EMBL" id="DQ321720">
    <property type="protein sequence ID" value="ABC55270.1"/>
    <property type="molecule type" value="Genomic_RNA"/>
</dbReference>
<dbReference type="PDB" id="5MM2">
    <property type="method" value="EM"/>
    <property type="resolution" value="2.70 A"/>
    <property type="chains" value="A=516-931, B=265-515, C=1-264"/>
</dbReference>
<dbReference type="PDBsum" id="5MM2"/>
<dbReference type="EMDB" id="EMD-3528"/>
<dbReference type="SMR" id="Q27YG7"/>
<dbReference type="GO" id="GO:0019028">
    <property type="term" value="C:viral capsid"/>
    <property type="evidence" value="ECO:0000314"/>
    <property type="project" value="UniProtKB"/>
</dbReference>
<comment type="function">
    <text evidence="1">ORF4 polyprotein codes for VP4a, VP4b, and VP4c, three of the four proteins that self-assemble to form the icosahedral capsid. The capsid is made of VP3 (coded by ORF3), VP4a, VP4b and VP4c.</text>
</comment>
<comment type="subcellular location">
    <subcellularLocation>
        <location evidence="2">Virion</location>
    </subcellularLocation>
</comment>
<comment type="PTM">
    <text evidence="1">Proteolytic processing of ORF4 polyprotein yields the VP4a, VP4b and VP4c capsid proteins.</text>
</comment>
<gene>
    <name type="ORF">ORF4</name>
</gene>
<feature type="chain" id="PRO_0000283697" description="ORF4 polyprotein">
    <location>
        <begin position="1"/>
        <end position="931"/>
    </location>
</feature>
<feature type="helix" evidence="3">
    <location>
        <begin position="277"/>
        <end position="279"/>
    </location>
</feature>
<feature type="strand" evidence="3">
    <location>
        <begin position="284"/>
        <end position="287"/>
    </location>
</feature>
<feature type="helix" evidence="3">
    <location>
        <begin position="317"/>
        <end position="319"/>
    </location>
</feature>
<feature type="strand" evidence="3">
    <location>
        <begin position="323"/>
        <end position="328"/>
    </location>
</feature>
<feature type="strand" evidence="3">
    <location>
        <begin position="338"/>
        <end position="342"/>
    </location>
</feature>
<feature type="strand" evidence="3">
    <location>
        <begin position="344"/>
        <end position="346"/>
    </location>
</feature>
<feature type="strand" evidence="3">
    <location>
        <begin position="353"/>
        <end position="355"/>
    </location>
</feature>
<feature type="helix" evidence="3">
    <location>
        <begin position="360"/>
        <end position="362"/>
    </location>
</feature>
<feature type="strand" evidence="3">
    <location>
        <begin position="363"/>
        <end position="368"/>
    </location>
</feature>
<feature type="strand" evidence="3">
    <location>
        <begin position="372"/>
        <end position="375"/>
    </location>
</feature>
<feature type="strand" evidence="3">
    <location>
        <begin position="380"/>
        <end position="384"/>
    </location>
</feature>
<feature type="strand" evidence="3">
    <location>
        <begin position="391"/>
        <end position="403"/>
    </location>
</feature>
<feature type="strand" evidence="3">
    <location>
        <begin position="406"/>
        <end position="410"/>
    </location>
</feature>
<feature type="strand" evidence="3">
    <location>
        <begin position="414"/>
        <end position="418"/>
    </location>
</feature>
<feature type="helix" evidence="3">
    <location>
        <begin position="435"/>
        <end position="438"/>
    </location>
</feature>
<feature type="strand" evidence="3">
    <location>
        <begin position="449"/>
        <end position="460"/>
    </location>
</feature>
<feature type="strand" evidence="3">
    <location>
        <begin position="468"/>
        <end position="472"/>
    </location>
</feature>
<feature type="helix" evidence="3">
    <location>
        <begin position="496"/>
        <end position="498"/>
    </location>
</feature>
<feature type="turn" evidence="3">
    <location>
        <begin position="499"/>
        <end position="501"/>
    </location>
</feature>
<feature type="turn" evidence="3">
    <location>
        <begin position="528"/>
        <end position="530"/>
    </location>
</feature>
<feature type="strand" evidence="3">
    <location>
        <begin position="548"/>
        <end position="551"/>
    </location>
</feature>
<feature type="helix" evidence="3">
    <location>
        <begin position="556"/>
        <end position="559"/>
    </location>
</feature>
<feature type="strand" evidence="3">
    <location>
        <begin position="562"/>
        <end position="569"/>
    </location>
</feature>
<feature type="strand" evidence="3">
    <location>
        <begin position="575"/>
        <end position="578"/>
    </location>
</feature>
<feature type="helix" evidence="3">
    <location>
        <begin position="597"/>
        <end position="602"/>
    </location>
</feature>
<feature type="strand" evidence="3">
    <location>
        <begin position="603"/>
        <end position="611"/>
    </location>
</feature>
<feature type="strand" evidence="3">
    <location>
        <begin position="613"/>
        <end position="624"/>
    </location>
</feature>
<feature type="strand" evidence="3">
    <location>
        <begin position="635"/>
        <end position="640"/>
    </location>
</feature>
<feature type="strand" evidence="3">
    <location>
        <begin position="642"/>
        <end position="644"/>
    </location>
</feature>
<feature type="helix" evidence="3">
    <location>
        <begin position="646"/>
        <end position="652"/>
    </location>
</feature>
<feature type="helix" evidence="3">
    <location>
        <begin position="658"/>
        <end position="660"/>
    </location>
</feature>
<feature type="strand" evidence="3">
    <location>
        <begin position="665"/>
        <end position="667"/>
    </location>
</feature>
<feature type="strand" evidence="3">
    <location>
        <begin position="698"/>
        <end position="702"/>
    </location>
</feature>
<feature type="strand" evidence="3">
    <location>
        <begin position="707"/>
        <end position="709"/>
    </location>
</feature>
<feature type="helix" evidence="3">
    <location>
        <begin position="715"/>
        <end position="717"/>
    </location>
</feature>
<feature type="turn" evidence="3">
    <location>
        <begin position="721"/>
        <end position="723"/>
    </location>
</feature>
<feature type="strand" evidence="3">
    <location>
        <begin position="727"/>
        <end position="732"/>
    </location>
</feature>
<feature type="strand" evidence="3">
    <location>
        <begin position="744"/>
        <end position="746"/>
    </location>
</feature>
<feature type="turn" evidence="3">
    <location>
        <begin position="747"/>
        <end position="749"/>
    </location>
</feature>
<feature type="strand" evidence="3">
    <location>
        <begin position="755"/>
        <end position="760"/>
    </location>
</feature>
<feature type="strand" evidence="3">
    <location>
        <begin position="774"/>
        <end position="781"/>
    </location>
</feature>
<feature type="strand" evidence="3">
    <location>
        <begin position="784"/>
        <end position="790"/>
    </location>
</feature>
<feature type="strand" evidence="3">
    <location>
        <begin position="802"/>
        <end position="804"/>
    </location>
</feature>
<feature type="strand" evidence="3">
    <location>
        <begin position="809"/>
        <end position="811"/>
    </location>
</feature>
<feature type="helix" evidence="3">
    <location>
        <begin position="812"/>
        <end position="814"/>
    </location>
</feature>
<feature type="helix" evidence="3">
    <location>
        <begin position="815"/>
        <end position="823"/>
    </location>
</feature>
<feature type="turn" evidence="3">
    <location>
        <begin position="827"/>
        <end position="829"/>
    </location>
</feature>
<feature type="helix" evidence="3">
    <location>
        <begin position="834"/>
        <end position="846"/>
    </location>
</feature>
<feature type="strand" evidence="3">
    <location>
        <begin position="851"/>
        <end position="856"/>
    </location>
</feature>
<feature type="helix" evidence="3">
    <location>
        <begin position="857"/>
        <end position="860"/>
    </location>
</feature>
<feature type="helix" evidence="3">
    <location>
        <begin position="870"/>
        <end position="874"/>
    </location>
</feature>
<feature type="turn" evidence="3">
    <location>
        <begin position="875"/>
        <end position="878"/>
    </location>
</feature>
<sequence length="931" mass="102290">MQNPTQTMHIYDMPLRVIAGLSTLAKTTEEDDNTSTGIVVSEVGEPQVVNHPAWIDPFVAYQLRAPRKNITPDFIFGRADIGNAFSAFLPRRFSAPAVGTRLVVDPVFTYQQRTVLGLYNYFHADFYYIVHVPAPLGTGIYLKIYAPEFDTTTVTRGIRFKPSASPTIALSVPWSNDLSTVETSVGRVGQSGGSIVIETIEDNSNETVNTPLSITVWCCMANIKATGYRHADTSAYNEKGMNFISVPVPKPPVPPTKPITGEEQADNEVTAEGGKLVQELVYDHSAIPVAPVVETQAEQPEVPVSLVATRKNDTGHLATKWYDFAKISLSNPANMNWTTLTIDPYNNVTLSRDGESMVLPWRRNVWTTGSKSIGYIRTMVAQINIPRPPQISGVLEVKDSINNSSISLVEFGGKVEIPIIPKVMNGLATTASLPRHRLNPWMRTAESKVELQYRIIAFNRTSDIADLNVSVLLRPGDSQFQLPMKPDNNVDTRHFELVEALMYHYDSLRIRGEEQSLPENAPNAVSNPQQFITPATALSAEEYNVHEALGETEELELDEFPVLVFKGNVPVDSVTSIPLDLATIYDFAWDGEQNAISQKFQRFAHLIPKSAGGFGPVIGNYTITANLPTGVAGRILHNCLPGDCVDLAVSRIFGLKSLLGVAGTAVSAIGGPLLNGLVNTAAPILSGAAHAIGGNVVGGLADAVIDIGSNLLTPKEKEQPSANSSAISGDIPISRFVEMLKYVKENYQDNPVFPTLLVEPQNFISNAMTALKTIPIEVFANMRNVKVERNLFDRTVVPTVKEATLADIVIPNHMYGYILRDFLQNKRAFQSGTKQNVYFQQFLTVLSQRNIRTHITLNDITSCSIDSESIANKIERVKHYLSTNSSGETTEEFSRTDTGLLPTTTRKIVLGESKRRTERYVAETVFPSVRQ</sequence>
<reference key="1">
    <citation type="journal article" date="2006" name="J. Gen. Virol.">
        <title>Nora virus, a persistent virus in Drosophila, defines a new picorna-like virus family.</title>
        <authorList>
            <person name="Habayeb M.S."/>
            <person name="Ekengren S.K."/>
            <person name="Hultmark D."/>
        </authorList>
    </citation>
    <scope>NUCLEOTIDE SEQUENCE [GENOMIC RNA]</scope>
</reference>
<reference key="2">
    <citation type="journal article" date="2016" name="Scientifica (Cairo)">
        <title>Characterization of Nora virus structural proteins via western blot analysis.</title>
        <authorList>
            <person name="Ericson B.L."/>
            <person name="Carlson D.J."/>
            <person name="Carlson K.A."/>
        </authorList>
    </citation>
    <scope>FUNCTION</scope>
    <scope>PROTEOLYTIC CLEAVAGE</scope>
    <scope>SUBCELLULAR LOCATION</scope>
</reference>
<reference key="3">
    <citation type="submission" date="2016-12" db="PDB data bank">
        <title>Uncommon interactions at outer and inner capsid surface stabilize the Nora virus capsid.</title>
        <authorList>
            <person name="Laurinmaki P."/>
            <person name="Shakeel S."/>
            <person name="Ekstrom J.-O."/>
            <person name="Butcher S.J."/>
        </authorList>
    </citation>
    <scope>STRUCTURE BY ELECTRON MICROSCOPY (2.70 ANGSTROMS)</scope>
</reference>
<proteinExistence type="evidence at protein level"/>